<sequence>MTPVHFSFTSAFILGLMGLAFHRTHLLSALLCLEGMMLSLFIALSLWALQMEATGYSVAPMLLLAFSACEASAGLALLVATARTHGTDRLQSLNLLQC</sequence>
<keyword id="KW-0249">Electron transport</keyword>
<keyword id="KW-0472">Membrane</keyword>
<keyword id="KW-0496">Mitochondrion</keyword>
<keyword id="KW-0520">NAD</keyword>
<keyword id="KW-1185">Reference proteome</keyword>
<keyword id="KW-0679">Respiratory chain</keyword>
<keyword id="KW-1278">Translocase</keyword>
<keyword id="KW-0812">Transmembrane</keyword>
<keyword id="KW-1133">Transmembrane helix</keyword>
<keyword id="KW-0813">Transport</keyword>
<keyword id="KW-0830">Ubiquinone</keyword>
<accession>P69304</accession>
<accession>P11630</accession>
<reference key="1">
    <citation type="journal article" date="1989" name="J. Mol. Evol.">
        <title>Variation in salmonid mitochondrial DNA: evolutionary constraints and mechanisms of substitution.</title>
        <authorList>
            <person name="Thomas W.K."/>
            <person name="Beckenbach A.T."/>
        </authorList>
    </citation>
    <scope>NUCLEOTIDE SEQUENCE OF 1-92</scope>
</reference>
<comment type="function">
    <text evidence="2">Core subunit of the mitochondrial membrane respiratory chain NADH dehydrogenase (Complex I) which catalyzes electron transfer from NADH through the respiratory chain, using ubiquinone as an electron acceptor. Part of the enzyme membrane arm which is embedded in the lipid bilayer and involved in proton translocation.</text>
</comment>
<comment type="catalytic activity">
    <reaction evidence="2">
        <text>a ubiquinone + NADH + 5 H(+)(in) = a ubiquinol + NAD(+) + 4 H(+)(out)</text>
        <dbReference type="Rhea" id="RHEA:29091"/>
        <dbReference type="Rhea" id="RHEA-COMP:9565"/>
        <dbReference type="Rhea" id="RHEA-COMP:9566"/>
        <dbReference type="ChEBI" id="CHEBI:15378"/>
        <dbReference type="ChEBI" id="CHEBI:16389"/>
        <dbReference type="ChEBI" id="CHEBI:17976"/>
        <dbReference type="ChEBI" id="CHEBI:57540"/>
        <dbReference type="ChEBI" id="CHEBI:57945"/>
        <dbReference type="EC" id="7.1.1.2"/>
    </reaction>
    <physiologicalReaction direction="left-to-right" evidence="2">
        <dbReference type="Rhea" id="RHEA:29092"/>
    </physiologicalReaction>
</comment>
<comment type="subcellular location">
    <subcellularLocation>
        <location evidence="1">Mitochondrion membrane</location>
        <topology evidence="1">Multi-pass membrane protein</topology>
    </subcellularLocation>
</comment>
<comment type="similarity">
    <text evidence="4">Belongs to the complex I subunit 4L family.</text>
</comment>
<name>NU4LM_ONCKI</name>
<feature type="chain" id="PRO_0000118457" description="NADH-ubiquinone oxidoreductase chain 4L">
    <location>
        <begin position="1"/>
        <end position="98"/>
    </location>
</feature>
<feature type="transmembrane region" description="Helical" evidence="3">
    <location>
        <begin position="1"/>
        <end position="21"/>
    </location>
</feature>
<feature type="transmembrane region" description="Helical" evidence="3">
    <location>
        <begin position="29"/>
        <end position="49"/>
    </location>
</feature>
<feature type="transmembrane region" description="Helical" evidence="3">
    <location>
        <begin position="58"/>
        <end position="78"/>
    </location>
</feature>
<gene>
    <name type="primary">MT-ND4L</name>
    <name type="synonym">MTND4L</name>
    <name type="synonym">NADH4L</name>
    <name type="synonym">ND4L</name>
</gene>
<geneLocation type="mitochondrion"/>
<proteinExistence type="inferred from homology"/>
<evidence type="ECO:0000250" key="1"/>
<evidence type="ECO:0000250" key="2">
    <source>
        <dbReference type="UniProtKB" id="P03901"/>
    </source>
</evidence>
<evidence type="ECO:0000255" key="3"/>
<evidence type="ECO:0000305" key="4"/>
<dbReference type="EC" id="7.1.1.2"/>
<dbReference type="PIR" id="E30401">
    <property type="entry name" value="E30401"/>
</dbReference>
<dbReference type="RefSeq" id="YP_001122908.1">
    <property type="nucleotide sequence ID" value="NC_009263.1"/>
</dbReference>
<dbReference type="SMR" id="P69304"/>
<dbReference type="GeneID" id="4955081"/>
<dbReference type="KEGG" id="oki:4955081"/>
<dbReference type="CTD" id="4539"/>
<dbReference type="OrthoDB" id="490049at7898"/>
<dbReference type="Proteomes" id="UP000694557">
    <property type="component" value="Unassembled WGS sequence"/>
</dbReference>
<dbReference type="GO" id="GO:0031966">
    <property type="term" value="C:mitochondrial membrane"/>
    <property type="evidence" value="ECO:0007669"/>
    <property type="project" value="UniProtKB-SubCell"/>
</dbReference>
<dbReference type="GO" id="GO:0045271">
    <property type="term" value="C:respiratory chain complex I"/>
    <property type="evidence" value="ECO:0000250"/>
    <property type="project" value="UniProtKB"/>
</dbReference>
<dbReference type="GO" id="GO:0008137">
    <property type="term" value="F:NADH dehydrogenase (ubiquinone) activity"/>
    <property type="evidence" value="ECO:0000250"/>
    <property type="project" value="UniProtKB"/>
</dbReference>
<dbReference type="GO" id="GO:0042773">
    <property type="term" value="P:ATP synthesis coupled electron transport"/>
    <property type="evidence" value="ECO:0007669"/>
    <property type="project" value="InterPro"/>
</dbReference>
<dbReference type="FunFam" id="1.10.287.3510:FF:000002">
    <property type="entry name" value="NADH-ubiquinone oxidoreductase chain 4L"/>
    <property type="match status" value="1"/>
</dbReference>
<dbReference type="Gene3D" id="1.10.287.3510">
    <property type="match status" value="1"/>
</dbReference>
<dbReference type="InterPro" id="IPR001133">
    <property type="entry name" value="NADH_UbQ_OxRdtase_chain4L/K"/>
</dbReference>
<dbReference type="InterPro" id="IPR039428">
    <property type="entry name" value="NUOK/Mnh_C1-like"/>
</dbReference>
<dbReference type="PANTHER" id="PTHR11434:SF0">
    <property type="entry name" value="NADH-UBIQUINONE OXIDOREDUCTASE CHAIN 4L"/>
    <property type="match status" value="1"/>
</dbReference>
<dbReference type="PANTHER" id="PTHR11434">
    <property type="entry name" value="NADH-UBIQUINONE OXIDOREDUCTASE SUBUNIT ND4L"/>
    <property type="match status" value="1"/>
</dbReference>
<dbReference type="Pfam" id="PF00420">
    <property type="entry name" value="Oxidored_q2"/>
    <property type="match status" value="1"/>
</dbReference>
<protein>
    <recommendedName>
        <fullName>NADH-ubiquinone oxidoreductase chain 4L</fullName>
        <ecNumber>7.1.1.2</ecNumber>
    </recommendedName>
    <alternativeName>
        <fullName>NADH dehydrogenase subunit 4L</fullName>
    </alternativeName>
</protein>
<organism>
    <name type="scientific">Oncorhynchus kisutch</name>
    <name type="common">Coho salmon</name>
    <name type="synonym">Salmo kisutch</name>
    <dbReference type="NCBI Taxonomy" id="8019"/>
    <lineage>
        <taxon>Eukaryota</taxon>
        <taxon>Metazoa</taxon>
        <taxon>Chordata</taxon>
        <taxon>Craniata</taxon>
        <taxon>Vertebrata</taxon>
        <taxon>Euteleostomi</taxon>
        <taxon>Actinopterygii</taxon>
        <taxon>Neopterygii</taxon>
        <taxon>Teleostei</taxon>
        <taxon>Protacanthopterygii</taxon>
        <taxon>Salmoniformes</taxon>
        <taxon>Salmonidae</taxon>
        <taxon>Salmoninae</taxon>
        <taxon>Oncorhynchus</taxon>
    </lineage>
</organism>